<protein>
    <recommendedName>
        <fullName>Integrin alpha-IIb</fullName>
    </recommendedName>
    <alternativeName>
        <fullName>GPalpha IIb</fullName>
        <shortName>GPIIb</shortName>
    </alternativeName>
    <alternativeName>
        <fullName>Platelet membrane glycoprotein IIb</fullName>
    </alternativeName>
    <cdAntigenName>CD41</cdAntigenName>
    <component>
        <recommendedName>
            <fullName>Integrin alpha-IIb heavy chain</fullName>
        </recommendedName>
    </component>
    <component>
        <recommendedName>
            <fullName>Integrin alpha-IIb light chain</fullName>
        </recommendedName>
    </component>
</protein>
<reference key="1">
    <citation type="journal article" date="1994" name="Gene">
        <title>Alternative splicing of the mRNA encoding baboon glycoprotein receptor GPIIb.</title>
        <authorList>
            <person name="Hayzer D.J."/>
            <person name="Shoji M."/>
            <person name="Kim T.M."/>
            <person name="Runge M.S."/>
            <person name="Hanson S.R."/>
        </authorList>
    </citation>
    <scope>NUCLEOTIDE SEQUENCE [MRNA]</scope>
</reference>
<gene>
    <name type="primary">ITGA2B</name>
</gene>
<evidence type="ECO:0000250" key="1">
    <source>
        <dbReference type="UniProtKB" id="P08514"/>
    </source>
</evidence>
<evidence type="ECO:0000250" key="2">
    <source>
        <dbReference type="UniProtKB" id="Q9QUM0"/>
    </source>
</evidence>
<evidence type="ECO:0000255" key="3"/>
<evidence type="ECO:0000255" key="4">
    <source>
        <dbReference type="PROSITE-ProRule" id="PRU00803"/>
    </source>
</evidence>
<evidence type="ECO:0000305" key="5"/>
<sequence>QVLDSPFPTGSAFGFSLRGAVDIDDNGYPDLIVGAYGANQVAVYRAQPVVKASVQLLVQDSLNPAVKSCVLPQTKTPVSCFKIQMCVGATGHNIPQKLSLNAELQLDRQKPRQGRRVLLLGSQQAGTTLNLDLGGKHSPICHTTMAFLRDEADIRDKLSPIVLSLNVSLPPTEAGMAPAVVLHGDTHVQEQTRIVLDCGEDDVCVPQLQLTASVTGSPLLVGADNVLELQMDTANEGEGAYEAELAVHLPQGAHYMRARSNVEGFERLICNQKKENETRVVLCELGNPMKKNTQIGIAMLVSVGNLEEAGESVSFQLQIRSKNSQNPNSKIVLLDVPVRAEAQVELRGNSFPASLVVAAEEGDREQNSLDSWGPKVEHTYELHNNGPGTVNGLHLSIHLPGQSQHSDLLYILDIQPQGGLQCFPQPPVNPLKVDWGLPTPSPSPVHPAHHKRDRRQIFLPEPEQPSRLQDPVLVSCDSAPCTVVQCDLQEMARGQRAMVTVLAFLWLPSLHQRPLDQFVLQSQAWFNVSSLPYAVPPLSLPRGEAQVRTQLLRALEERAIPIWWVLVGVLGGLLLLTILVLAMWKVGFFKRNRPPLEEDDEEGE</sequence>
<proteinExistence type="evidence at transcript level"/>
<accession>P53711</accession>
<organism>
    <name type="scientific">Papio cynocephalus</name>
    <name type="common">Yellow baboon</name>
    <dbReference type="NCBI Taxonomy" id="9556"/>
    <lineage>
        <taxon>Eukaryota</taxon>
        <taxon>Metazoa</taxon>
        <taxon>Chordata</taxon>
        <taxon>Craniata</taxon>
        <taxon>Vertebrata</taxon>
        <taxon>Euteleostomi</taxon>
        <taxon>Mammalia</taxon>
        <taxon>Eutheria</taxon>
        <taxon>Euarchontoglires</taxon>
        <taxon>Primates</taxon>
        <taxon>Haplorrhini</taxon>
        <taxon>Catarrhini</taxon>
        <taxon>Cercopithecidae</taxon>
        <taxon>Cercopithecinae</taxon>
        <taxon>Papio</taxon>
    </lineage>
</organism>
<keyword id="KW-0106">Calcium</keyword>
<keyword id="KW-0130">Cell adhesion</keyword>
<keyword id="KW-1015">Disulfide bond</keyword>
<keyword id="KW-0325">Glycoprotein</keyword>
<keyword id="KW-0401">Integrin</keyword>
<keyword id="KW-0472">Membrane</keyword>
<keyword id="KW-0479">Metal-binding</keyword>
<keyword id="KW-0675">Receptor</keyword>
<keyword id="KW-0812">Transmembrane</keyword>
<keyword id="KW-1133">Transmembrane helix</keyword>
<name>ITA2B_PAPCY</name>
<comment type="function">
    <text>Integrin alpha-IIb/beta-3 is a receptor for fibronectin, fibrinogen, plasminogen, prothrombin, thrombospondin and vitronectin. It recognizes the sequence R-G-D in a wide array of ligands. It recognizes the sequence H-H-L-G-G-G-A-K-Q-A-G-D-V in fibrinogen gamma chain. Following activation integrin alpha-IIb/beta-3 brings about platelet/platelet interaction through binding of soluble fibrinogen. This step leads to rapid platelet aggregation which physically plugs ruptured endothelial cell surface.</text>
</comment>
<comment type="subunit">
    <text evidence="1 2">Heterodimer of an alpha and a beta subunit. The alpha subunit is composed of a heavy and a light chain linked by a disulfide bond. Alpha-IIb associates with beta-3. Directly interacts with RNF181. Interacts (via C-terminus cytoplasmic tail region) with CIB1; the interaction is direct and calcium-dependent. Interacts (via C-terminus cytoplasmic tail region) with CIB2, CIB3 and CIB4; the interactions are stabilized/increased in a calcium and magnesium-dependent manner (By similarity). ITGA2B:ITGB3 interacts with PPIA/CYPA; the interaction is ROS and PPIase activity-dependent and is increased in the presence of thrombin (By similarity). ITGA2B:ITGB3 interacts with SELP (via C-type lectin domain); the interaction mediates cell-cell interaction and adhesion (By similarity).</text>
</comment>
<comment type="subcellular location">
    <subcellularLocation>
        <location>Membrane</location>
        <topology>Single-pass type I membrane protein</topology>
    </subcellularLocation>
</comment>
<comment type="similarity">
    <text evidence="5">Belongs to the integrin alpha chain family.</text>
</comment>
<feature type="chain" id="PRO_0000016281" description="Integrin alpha-IIb heavy chain">
    <location>
        <begin position="1" status="less than"/>
        <end position="467"/>
    </location>
</feature>
<feature type="chain" id="PRO_0000016282" description="Integrin alpha-IIb light chain">
    <location>
        <begin position="468"/>
        <end position="604"/>
    </location>
</feature>
<feature type="topological domain" description="Extracellular" evidence="3">
    <location>
        <begin position="1" status="less than"/>
        <end position="558"/>
    </location>
</feature>
<feature type="transmembrane region" description="Helical" evidence="3">
    <location>
        <begin position="559"/>
        <end position="584"/>
    </location>
</feature>
<feature type="topological domain" description="Cytoplasmic" evidence="3">
    <location>
        <begin position="585"/>
        <end position="604"/>
    </location>
</feature>
<feature type="repeat" description="FG-GAP" evidence="4">
    <location>
        <begin position="1"/>
        <end position="61"/>
    </location>
</feature>
<feature type="short sequence motif" description="GFFKR motif">
    <location>
        <begin position="587"/>
        <end position="591"/>
    </location>
</feature>
<feature type="binding site" evidence="1">
    <location>
        <position position="22"/>
    </location>
    <ligand>
        <name>Ca(2+)</name>
        <dbReference type="ChEBI" id="CHEBI:29108"/>
        <label>4</label>
    </ligand>
</feature>
<feature type="binding site" evidence="1">
    <location>
        <position position="24"/>
    </location>
    <ligand>
        <name>Ca(2+)</name>
        <dbReference type="ChEBI" id="CHEBI:29108"/>
        <label>4</label>
    </ligand>
</feature>
<feature type="binding site" evidence="1">
    <location>
        <position position="26"/>
    </location>
    <ligand>
        <name>Ca(2+)</name>
        <dbReference type="ChEBI" id="CHEBI:29108"/>
        <label>4</label>
    </ligand>
</feature>
<feature type="binding site" evidence="1">
    <location>
        <position position="28"/>
    </location>
    <ligand>
        <name>Ca(2+)</name>
        <dbReference type="ChEBI" id="CHEBI:29108"/>
        <label>4</label>
    </ligand>
</feature>
<feature type="binding site" evidence="1">
    <location>
        <position position="30"/>
    </location>
    <ligand>
        <name>Ca(2+)</name>
        <dbReference type="ChEBI" id="CHEBI:29108"/>
        <label>4</label>
    </ligand>
</feature>
<feature type="glycosylation site" description="N-linked (GlcNAc...) asparagine" evidence="3">
    <location>
        <position position="166"/>
    </location>
</feature>
<feature type="glycosylation site" description="N-linked (GlcNAc...) asparagine" evidence="3">
    <location>
        <position position="276"/>
    </location>
</feature>
<feature type="glycosylation site" description="N-linked (GlcNAc...) asparagine" evidence="3">
    <location>
        <position position="527"/>
    </location>
</feature>
<feature type="disulfide bond" evidence="1">
    <location>
        <begin position="69"/>
        <end position="80"/>
    </location>
</feature>
<feature type="disulfide bond" evidence="1">
    <location>
        <begin position="86"/>
        <end position="141"/>
    </location>
</feature>
<feature type="disulfide bond" evidence="1">
    <location>
        <begin position="198"/>
        <end position="204"/>
    </location>
</feature>
<feature type="disulfide bond" evidence="1">
    <location>
        <begin position="270"/>
        <end position="283"/>
    </location>
</feature>
<feature type="disulfide bond" description="Interchain (between heavy and light chains)" evidence="1">
    <location>
        <begin position="422"/>
        <end position="486"/>
    </location>
</feature>
<feature type="disulfide bond" evidence="1">
    <location>
        <begin position="476"/>
        <end position="481"/>
    </location>
</feature>
<feature type="non-terminal residue">
    <location>
        <position position="1"/>
    </location>
</feature>
<dbReference type="EMBL" id="L12233">
    <property type="protein sequence ID" value="AAA65936.1"/>
    <property type="molecule type" value="mRNA"/>
</dbReference>
<dbReference type="PIR" id="I36917">
    <property type="entry name" value="I36917"/>
</dbReference>
<dbReference type="BMRB" id="P53711"/>
<dbReference type="SMR" id="P53711"/>
<dbReference type="GlyCosmos" id="P53711">
    <property type="glycosylation" value="3 sites, No reported glycans"/>
</dbReference>
<dbReference type="GO" id="GO:0009897">
    <property type="term" value="C:external side of plasma membrane"/>
    <property type="evidence" value="ECO:0007669"/>
    <property type="project" value="TreeGrafter"/>
</dbReference>
<dbReference type="GO" id="GO:0008305">
    <property type="term" value="C:integrin complex"/>
    <property type="evidence" value="ECO:0007669"/>
    <property type="project" value="InterPro"/>
</dbReference>
<dbReference type="GO" id="GO:0005178">
    <property type="term" value="F:integrin binding"/>
    <property type="evidence" value="ECO:0007669"/>
    <property type="project" value="TreeGrafter"/>
</dbReference>
<dbReference type="GO" id="GO:0046872">
    <property type="term" value="F:metal ion binding"/>
    <property type="evidence" value="ECO:0007669"/>
    <property type="project" value="UniProtKB-KW"/>
</dbReference>
<dbReference type="GO" id="GO:0001525">
    <property type="term" value="P:angiogenesis"/>
    <property type="evidence" value="ECO:0007669"/>
    <property type="project" value="TreeGrafter"/>
</dbReference>
<dbReference type="GO" id="GO:0033627">
    <property type="term" value="P:cell adhesion mediated by integrin"/>
    <property type="evidence" value="ECO:0007669"/>
    <property type="project" value="TreeGrafter"/>
</dbReference>
<dbReference type="GO" id="GO:0098609">
    <property type="term" value="P:cell-cell adhesion"/>
    <property type="evidence" value="ECO:0007669"/>
    <property type="project" value="TreeGrafter"/>
</dbReference>
<dbReference type="GO" id="GO:0007160">
    <property type="term" value="P:cell-matrix adhesion"/>
    <property type="evidence" value="ECO:0007669"/>
    <property type="project" value="TreeGrafter"/>
</dbReference>
<dbReference type="GO" id="GO:0007229">
    <property type="term" value="P:integrin-mediated signaling pathway"/>
    <property type="evidence" value="ECO:0007669"/>
    <property type="project" value="UniProtKB-KW"/>
</dbReference>
<dbReference type="FunFam" id="2.60.40.1510:FF:000001">
    <property type="entry name" value="Integrin alpha V"/>
    <property type="match status" value="1"/>
</dbReference>
<dbReference type="FunFam" id="1.20.5.930:FF:000001">
    <property type="entry name" value="Integrin subunit alpha V"/>
    <property type="match status" value="1"/>
</dbReference>
<dbReference type="FunFam" id="2.60.40.1460:FF:000001">
    <property type="entry name" value="Integrin, alpha V"/>
    <property type="match status" value="1"/>
</dbReference>
<dbReference type="Gene3D" id="1.20.5.930">
    <property type="entry name" value="Bicelle-embedded integrin alpha(iib) transmembrane segment"/>
    <property type="match status" value="1"/>
</dbReference>
<dbReference type="Gene3D" id="2.130.10.130">
    <property type="entry name" value="Integrin alpha, N-terminal"/>
    <property type="match status" value="1"/>
</dbReference>
<dbReference type="Gene3D" id="2.60.40.1460">
    <property type="entry name" value="Integrin domains. Chain A, domain 2"/>
    <property type="match status" value="1"/>
</dbReference>
<dbReference type="Gene3D" id="2.60.40.1510">
    <property type="entry name" value="ntegrin, alpha v. Chain A, domain 3"/>
    <property type="match status" value="1"/>
</dbReference>
<dbReference type="Gene3D" id="2.60.40.1530">
    <property type="entry name" value="ntegrin, alpha v. Chain A, domain 4"/>
    <property type="match status" value="1"/>
</dbReference>
<dbReference type="InterPro" id="IPR013519">
    <property type="entry name" value="Int_alpha_beta-p"/>
</dbReference>
<dbReference type="InterPro" id="IPR000413">
    <property type="entry name" value="Integrin_alpha"/>
</dbReference>
<dbReference type="InterPro" id="IPR018184">
    <property type="entry name" value="Integrin_alpha_C_CS"/>
</dbReference>
<dbReference type="InterPro" id="IPR013649">
    <property type="entry name" value="Integrin_alpha_Ig-like_1"/>
</dbReference>
<dbReference type="InterPro" id="IPR048285">
    <property type="entry name" value="Integrin_alpha_Ig-like_2"/>
</dbReference>
<dbReference type="InterPro" id="IPR048286">
    <property type="entry name" value="Integrin_alpha_Ig-like_3"/>
</dbReference>
<dbReference type="InterPro" id="IPR028994">
    <property type="entry name" value="Integrin_alpha_N"/>
</dbReference>
<dbReference type="InterPro" id="IPR032695">
    <property type="entry name" value="Integrin_dom_sf"/>
</dbReference>
<dbReference type="PANTHER" id="PTHR23220">
    <property type="entry name" value="INTEGRIN ALPHA"/>
    <property type="match status" value="1"/>
</dbReference>
<dbReference type="PANTHER" id="PTHR23220:SF73">
    <property type="entry name" value="INTEGRIN ALPHA-IIB"/>
    <property type="match status" value="1"/>
</dbReference>
<dbReference type="Pfam" id="PF08441">
    <property type="entry name" value="Integrin_A_Ig_1"/>
    <property type="match status" value="1"/>
</dbReference>
<dbReference type="Pfam" id="PF20805">
    <property type="entry name" value="Integrin_A_Ig_2"/>
    <property type="match status" value="1"/>
</dbReference>
<dbReference type="Pfam" id="PF20806">
    <property type="entry name" value="Integrin_A_Ig_3"/>
    <property type="match status" value="1"/>
</dbReference>
<dbReference type="Pfam" id="PF00357">
    <property type="entry name" value="Integrin_alpha"/>
    <property type="match status" value="1"/>
</dbReference>
<dbReference type="PRINTS" id="PR01185">
    <property type="entry name" value="INTEGRINA"/>
</dbReference>
<dbReference type="SMART" id="SM00191">
    <property type="entry name" value="Int_alpha"/>
    <property type="match status" value="1"/>
</dbReference>
<dbReference type="SUPFAM" id="SSF69318">
    <property type="entry name" value="Integrin alpha N-terminal domain"/>
    <property type="match status" value="1"/>
</dbReference>
<dbReference type="SUPFAM" id="SSF69179">
    <property type="entry name" value="Integrin domains"/>
    <property type="match status" value="3"/>
</dbReference>
<dbReference type="PROSITE" id="PS51470">
    <property type="entry name" value="FG_GAP"/>
    <property type="match status" value="1"/>
</dbReference>
<dbReference type="PROSITE" id="PS00242">
    <property type="entry name" value="INTEGRIN_ALPHA"/>
    <property type="match status" value="1"/>
</dbReference>